<dbReference type="EC" id="7.1.2.2" evidence="1"/>
<dbReference type="EMBL" id="X76876">
    <property type="protein sequence ID" value="CAA54203.1"/>
    <property type="molecule type" value="Genomic_DNA"/>
</dbReference>
<dbReference type="SMR" id="P42466"/>
<dbReference type="GO" id="GO:0005886">
    <property type="term" value="C:plasma membrane"/>
    <property type="evidence" value="ECO:0007669"/>
    <property type="project" value="UniProtKB-SubCell"/>
</dbReference>
<dbReference type="GO" id="GO:0045259">
    <property type="term" value="C:proton-transporting ATP synthase complex"/>
    <property type="evidence" value="ECO:0007669"/>
    <property type="project" value="UniProtKB-KW"/>
</dbReference>
<dbReference type="GO" id="GO:0005524">
    <property type="term" value="F:ATP binding"/>
    <property type="evidence" value="ECO:0007669"/>
    <property type="project" value="UniProtKB-UniRule"/>
</dbReference>
<dbReference type="GO" id="GO:0016887">
    <property type="term" value="F:ATP hydrolysis activity"/>
    <property type="evidence" value="ECO:0007669"/>
    <property type="project" value="InterPro"/>
</dbReference>
<dbReference type="GO" id="GO:0046933">
    <property type="term" value="F:proton-transporting ATP synthase activity, rotational mechanism"/>
    <property type="evidence" value="ECO:0007669"/>
    <property type="project" value="UniProtKB-UniRule"/>
</dbReference>
<dbReference type="CDD" id="cd18110">
    <property type="entry name" value="ATP-synt_F1_beta_C"/>
    <property type="match status" value="1"/>
</dbReference>
<dbReference type="CDD" id="cd18115">
    <property type="entry name" value="ATP-synt_F1_beta_N"/>
    <property type="match status" value="1"/>
</dbReference>
<dbReference type="CDD" id="cd01133">
    <property type="entry name" value="F1-ATPase_beta_CD"/>
    <property type="match status" value="1"/>
</dbReference>
<dbReference type="FunFam" id="1.10.1140.10:FF:000001">
    <property type="entry name" value="ATP synthase subunit beta"/>
    <property type="match status" value="1"/>
</dbReference>
<dbReference type="FunFam" id="3.40.50.300:FF:000004">
    <property type="entry name" value="ATP synthase subunit beta"/>
    <property type="match status" value="1"/>
</dbReference>
<dbReference type="Gene3D" id="2.40.10.170">
    <property type="match status" value="1"/>
</dbReference>
<dbReference type="Gene3D" id="1.10.1140.10">
    <property type="entry name" value="Bovine Mitochondrial F1-atpase, Atp Synthase Beta Chain, Chain D, domain 3"/>
    <property type="match status" value="1"/>
</dbReference>
<dbReference type="Gene3D" id="3.40.50.300">
    <property type="entry name" value="P-loop containing nucleotide triphosphate hydrolases"/>
    <property type="match status" value="1"/>
</dbReference>
<dbReference type="HAMAP" id="MF_01347">
    <property type="entry name" value="ATP_synth_beta_bact"/>
    <property type="match status" value="1"/>
</dbReference>
<dbReference type="InterPro" id="IPR003593">
    <property type="entry name" value="AAA+_ATPase"/>
</dbReference>
<dbReference type="InterPro" id="IPR055190">
    <property type="entry name" value="ATP-synt_VA_C"/>
</dbReference>
<dbReference type="InterPro" id="IPR005722">
    <property type="entry name" value="ATP_synth_F1_bsu"/>
</dbReference>
<dbReference type="InterPro" id="IPR020003">
    <property type="entry name" value="ATPase_a/bsu_AS"/>
</dbReference>
<dbReference type="InterPro" id="IPR050053">
    <property type="entry name" value="ATPase_alpha/beta_chains"/>
</dbReference>
<dbReference type="InterPro" id="IPR004100">
    <property type="entry name" value="ATPase_F1/V1/A1_a/bsu_N"/>
</dbReference>
<dbReference type="InterPro" id="IPR036121">
    <property type="entry name" value="ATPase_F1/V1/A1_a/bsu_N_sf"/>
</dbReference>
<dbReference type="InterPro" id="IPR000194">
    <property type="entry name" value="ATPase_F1/V1/A1_a/bsu_nucl-bd"/>
</dbReference>
<dbReference type="InterPro" id="IPR024034">
    <property type="entry name" value="ATPase_F1/V1_b/a_C"/>
</dbReference>
<dbReference type="InterPro" id="IPR027417">
    <property type="entry name" value="P-loop_NTPase"/>
</dbReference>
<dbReference type="NCBIfam" id="TIGR01039">
    <property type="entry name" value="atpD"/>
    <property type="match status" value="1"/>
</dbReference>
<dbReference type="PANTHER" id="PTHR15184">
    <property type="entry name" value="ATP SYNTHASE"/>
    <property type="match status" value="1"/>
</dbReference>
<dbReference type="PANTHER" id="PTHR15184:SF71">
    <property type="entry name" value="ATP SYNTHASE SUBUNIT BETA, MITOCHONDRIAL"/>
    <property type="match status" value="1"/>
</dbReference>
<dbReference type="Pfam" id="PF00006">
    <property type="entry name" value="ATP-synt_ab"/>
    <property type="match status" value="1"/>
</dbReference>
<dbReference type="Pfam" id="PF02874">
    <property type="entry name" value="ATP-synt_ab_N"/>
    <property type="match status" value="1"/>
</dbReference>
<dbReference type="Pfam" id="PF22919">
    <property type="entry name" value="ATP-synt_VA_C"/>
    <property type="match status" value="1"/>
</dbReference>
<dbReference type="SMART" id="SM00382">
    <property type="entry name" value="AAA"/>
    <property type="match status" value="1"/>
</dbReference>
<dbReference type="SUPFAM" id="SSF47917">
    <property type="entry name" value="C-terminal domain of alpha and beta subunits of F1 ATP synthase"/>
    <property type="match status" value="1"/>
</dbReference>
<dbReference type="SUPFAM" id="SSF50615">
    <property type="entry name" value="N-terminal domain of alpha and beta subunits of F1 ATP synthase"/>
    <property type="match status" value="1"/>
</dbReference>
<dbReference type="SUPFAM" id="SSF52540">
    <property type="entry name" value="P-loop containing nucleoside triphosphate hydrolases"/>
    <property type="match status" value="1"/>
</dbReference>
<dbReference type="PROSITE" id="PS00152">
    <property type="entry name" value="ATPASE_ALPHA_BETA"/>
    <property type="match status" value="1"/>
</dbReference>
<keyword id="KW-0066">ATP synthesis</keyword>
<keyword id="KW-0067">ATP-binding</keyword>
<keyword id="KW-1003">Cell membrane</keyword>
<keyword id="KW-0139">CF(1)</keyword>
<keyword id="KW-0375">Hydrogen ion transport</keyword>
<keyword id="KW-0406">Ion transport</keyword>
<keyword id="KW-0472">Membrane</keyword>
<keyword id="KW-0547">Nucleotide-binding</keyword>
<keyword id="KW-1278">Translocase</keyword>
<keyword id="KW-0813">Transport</keyword>
<name>ATPB_HERAU</name>
<organism>
    <name type="scientific">Herpetosiphon aurantiacus</name>
    <name type="common">Herpetosiphon giganteus</name>
    <dbReference type="NCBI Taxonomy" id="65"/>
    <lineage>
        <taxon>Bacteria</taxon>
        <taxon>Bacillati</taxon>
        <taxon>Chloroflexota</taxon>
        <taxon>Chloroflexia</taxon>
        <taxon>Herpetosiphonales</taxon>
        <taxon>Herpetosiphonaceae</taxon>
        <taxon>Herpetosiphon</taxon>
    </lineage>
</organism>
<reference key="1">
    <citation type="journal article" date="1993" name="Antonie Van Leeuwenhoek">
        <title>Phylogenetic relationships of Bacteria based on comparative sequence analysis of elongation factor Tu and ATP-synthase beta-subunit genes.</title>
        <authorList>
            <person name="Ludwig W."/>
            <person name="Neumaier J."/>
            <person name="Klugbauer N."/>
            <person name="Brockmann E."/>
            <person name="Roller C."/>
            <person name="Klugbauer S."/>
            <person name="Reetz K."/>
            <person name="Schachtner I."/>
            <person name="Ludvigsen A."/>
            <person name="Bachleitner M."/>
            <person name="Fischer U."/>
            <person name="Schleifer K.H."/>
        </authorList>
    </citation>
    <scope>NUCLEOTIDE SEQUENCE [GENOMIC DNA]</scope>
    <source>
        <strain>HPGA1</strain>
    </source>
</reference>
<accession>P42466</accession>
<sequence length="471" mass="51057">MATGKILQITGVVIDAEFPADSLPQIYNALEIPLGQGRPSLICEVQQQLGDSVVRAVAMSTTDGLVRGMDVINTGAPISVPVGPETLGRVFDVQGRPIDGEGPVGTTKTMPIHRPAPTFEEQSNRAELFETGIKVIDLIAPFTKGGKTGVFGGAGVGKTVIIQELISNIAKEQSGYSVFAGVGERSREGNDLIHEMKDSKIPGTDQTVFDKTVMVFGQMNEPPGARLRVALSALTMAEYFREEGRDVLLFVDNIFRFTQAGSEVSALLGRMPSQVGYQPTLGTEMGELQERITSTKTGSITSLQAVYVPADDYTDPAPATTFAHLDATISLERSISEKGIYPAVDPLASTSRILDPNIVGEEHYRVATEVQRMLQRYKDLQDIIAILGVEELSDDDKLTVSRARKLERFFSQPFGVAEVFTNIPGKYVAVGDTVKSFARVLAGEFDHIPESFFFMKGRIDDVVAAFDASKQ</sequence>
<feature type="chain" id="PRO_0000144446" description="ATP synthase subunit beta">
    <location>
        <begin position="1"/>
        <end position="471"/>
    </location>
</feature>
<feature type="binding site" evidence="1">
    <location>
        <begin position="152"/>
        <end position="159"/>
    </location>
    <ligand>
        <name>ATP</name>
        <dbReference type="ChEBI" id="CHEBI:30616"/>
    </ligand>
</feature>
<gene>
    <name evidence="1" type="primary">atpD</name>
</gene>
<proteinExistence type="inferred from homology"/>
<evidence type="ECO:0000255" key="1">
    <source>
        <dbReference type="HAMAP-Rule" id="MF_01347"/>
    </source>
</evidence>
<protein>
    <recommendedName>
        <fullName evidence="1">ATP synthase subunit beta</fullName>
        <ecNumber evidence="1">7.1.2.2</ecNumber>
    </recommendedName>
    <alternativeName>
        <fullName evidence="1">ATP synthase F1 sector subunit beta</fullName>
    </alternativeName>
    <alternativeName>
        <fullName evidence="1">F-ATPase subunit beta</fullName>
    </alternativeName>
</protein>
<comment type="function">
    <text evidence="1">Produces ATP from ADP in the presence of a proton gradient across the membrane. The catalytic sites are hosted primarily by the beta subunits.</text>
</comment>
<comment type="catalytic activity">
    <reaction evidence="1">
        <text>ATP + H2O + 4 H(+)(in) = ADP + phosphate + 5 H(+)(out)</text>
        <dbReference type="Rhea" id="RHEA:57720"/>
        <dbReference type="ChEBI" id="CHEBI:15377"/>
        <dbReference type="ChEBI" id="CHEBI:15378"/>
        <dbReference type="ChEBI" id="CHEBI:30616"/>
        <dbReference type="ChEBI" id="CHEBI:43474"/>
        <dbReference type="ChEBI" id="CHEBI:456216"/>
        <dbReference type="EC" id="7.1.2.2"/>
    </reaction>
</comment>
<comment type="subunit">
    <text evidence="1">F-type ATPases have 2 components, CF(1) - the catalytic core - and CF(0) - the membrane proton channel. CF(1) has five subunits: alpha(3), beta(3), gamma(1), delta(1), epsilon(1). CF(0) has three main subunits: a(1), b(2) and c(9-12). The alpha and beta chains form an alternating ring which encloses part of the gamma chain. CF(1) is attached to CF(0) by a central stalk formed by the gamma and epsilon chains, while a peripheral stalk is formed by the delta and b chains.</text>
</comment>
<comment type="subcellular location">
    <subcellularLocation>
        <location evidence="1">Cell membrane</location>
        <topology evidence="1">Peripheral membrane protein</topology>
    </subcellularLocation>
</comment>
<comment type="similarity">
    <text evidence="1">Belongs to the ATPase alpha/beta chains family.</text>
</comment>